<sequence length="2188" mass="239457">MSAAQGLALKLRAAPAAGGVRGEKRRRAASATAAAAARPRHGAMSLEGGFLGGALPAEDRVAPRASASRQAEAGAGAGAARPPPRSMSKIPESSIGLYDPSMERDSCGVGFIAELSGEYSRKTVDDAIEMLDRMAHRGACGCEKNTGDGAGILVALPHNFFREVTKDAGFELPPPGEYAVGMFFMPTDDKRREKSKLLFREKAELLGHTVLGWRRVPTDNSGLGQSAVDTEPVIEQVFVTKSASSKADFERQMYVLRRFSVMSIREVLGVKNGGTKDFYMCSLSSRTIVYKGQLKPSQLKGYFFADLGDESFTSYMALIHSRFSTNTFPSWDRAQPMRVLGHNGEINTLRGNKNWMKAREGLLKCEGLGLTRDEMLKLLPIVDATSSDSGAIDNVLELLIQSGRSAPEAVMMMIPEAWQNDVNMDPERKALYEFFSALMEPWDGPALISFTDGRYLGATLDRNGLRPGRFYVTYSGRVIMASEVGVVDVPPQDVSRKGRLNPGMMLLVDFENHCVVNDDELKKEYSKVRPYGEWLKRQRIQLTDIIESVNEAERIAPSISGALPITKENKADMGICGILTPLKAFGYTREALEMLMLPMAKDGQEALGSMGNDTPLAVMSNREKLTFEYFKQMFAQVTNPPIDPIREKIVTSMECMIGPEGDLSETTERQCHRLTLKSPLLNTNEMEAIKKMNYRGWRSKVLDITYPKKNGRMGLKQTLDKICAQAREAIHEGYTILVLSDRGFSSERVAVSSLLAVGAVHQHLVSHLERTRIGLLVESAEPREVHHFSTLIGFGADAICPYLAIEAIWRLQIDGRIPPNDGKPYTQEQLIEKYFYASNYGMMKVLAKMGISTLASYKGAQIFEALGLASEVVSKCFEGTPSRVEGATFEMLAQDALRLHEIAFPSRTLPPGSADANALPNPGDYHWRKNGEVHLNDPFSIAKLQEAARINSREAYKEYSRRIYELNKACTLRGMLKFREIPNQISLDEVEPAKEIVKRFCTGAMSYGSISLEAHTSLAEAMNTLGGKSNTGEGGEQPCRMVPLPDGSKNPRISAIKQVASGRFGVSIYYLTNAVEVQIKMAQGAKPGEGGELPGHKVIGDIAVTRNSTAGVGLISPPPHHDIYSIEDLAQLIHDLKNANPGARISVKLVSEAGVGIVASGVVKGHADHVLISGHDGGTGASRWTGIKNAGLPWELGLAETHQTLVANGLRGRAVLQTDGQMKTGRDVAVACLLGAEEFGFSTAPLITLGCIMMRKCHTNTCPAGIATQDPVLRAKFAGKPEHVINYFFMLAEEVREIMAQLGFRTVNEMVGRSDMLEIDPKVLEGNEKLENIDLSRLLKPAAEISPGAVQYCVEKQDHGLDMALDNKLIASSTAALRKGVRVFIETPVRNINRAVGTMLSHEVTKRYHIHGLPSDTIHIKLNGSAGQSFGAFLCPGITLELEGDSNDYVGKGLSGGKIVVYPPRNSRFNPQDNIVIGNVALYGATKGEAYFNGMAAERFCVRNSGAQAVVEGIGDHGCEYMTGGTAVILGKTGRNFAAGMSGGIAYVYDVDGKFSSRCNYELVDLYAVVEEDDITTLRMMIQQHRLHTQSDLARDILLNFDTLLPKFIKVYPRDYKRVLDKLKEEKAAKEAEQKAREVVDKKPVEVIQAPNGISVKTEKVMNEEPSSRPSRVSNAVKYRGFIKYEREGTSYRDPNERVKDWNEVAIELVPGPLLKTQSARCMDCGTPFCHQEGSGAGCPLGNKIPEFNELVHQNRWHEALDRLLETNNFPEFTGRVCPAPCEGSCVLGIIDNPVSIKSIECAIIDKGFEEGWMVPRPPLRRTGKRVAIVGSGPAGLAAADQLNKMGHFVTVFERADRIGGLMMYGVPNMKADKEGIVQRRVELMAKEGVQFIVNAHVGSDPLYSVEKLRSENDAIILACGATKPKDLPIPGRELAGIHFAMEFLHANTKSLLDSNLEDGNYISAQGRKVVVIGGGDTGTDCIGTSIRHGCTNLVNLELLPEPPRKRAPDNPWPQWPRIFRVDYGHQEATSKFGKDPRSYKVLTKRFIGDENGNVKALEVIRVEWGKVNGRFQFKEVEGSEEIIEADLVLLAMGFLGPEATVANKLGLEQDMRSNFKAQFGNFATNVEGVFAAGDCRRGQSLVVWAITEGRQAAAAVDNYLSKDDEGETNGTEDIAVSSEGLVQPVVA</sequence>
<protein>
    <recommendedName>
        <fullName>Glutamate synthase 2 [NADH], chloroplastic</fullName>
        <ecNumber>1.4.1.14</ecNumber>
    </recommendedName>
    <alternativeName>
        <fullName>NADH-dependent glutamate synthase 2</fullName>
        <shortName>NADH-GOGAT 2</shortName>
    </alternativeName>
</protein>
<reference key="1">
    <citation type="journal article" date="2007" name="J. Exp. Bot.">
        <title>Assimilation of ammonium ions and reutilization of nitrogen in rice (Oryza sativa L.).</title>
        <authorList>
            <person name="Tabuchi M."/>
            <person name="Abiko T."/>
            <person name="Yamaya T."/>
        </authorList>
    </citation>
    <scope>NUCLEOTIDE SEQUENCE [MRNA]</scope>
    <scope>TISSUE SPECIFICITY</scope>
    <source>
        <strain>cv. Sasanishiki</strain>
        <tissue>Shoot</tissue>
    </source>
</reference>
<reference key="2">
    <citation type="journal article" date="2005" name="Mol. Genet. Genomics">
        <title>A fine physical map of the rice chromosome 5.</title>
        <authorList>
            <person name="Cheng C.-H."/>
            <person name="Chung M.C."/>
            <person name="Liu S.-M."/>
            <person name="Chen S.-K."/>
            <person name="Kao F.Y."/>
            <person name="Lin S.-J."/>
            <person name="Hsiao S.-H."/>
            <person name="Tseng I.C."/>
            <person name="Hsing Y.-I.C."/>
            <person name="Wu H.-P."/>
            <person name="Chen C.-S."/>
            <person name="Shaw J.-F."/>
            <person name="Wu J."/>
            <person name="Matsumoto T."/>
            <person name="Sasaki T."/>
            <person name="Chen H.-C."/>
            <person name="Chow T.-Y."/>
        </authorList>
    </citation>
    <scope>NUCLEOTIDE SEQUENCE [LARGE SCALE GENOMIC DNA]</scope>
    <source>
        <strain>cv. Nipponbare</strain>
    </source>
</reference>
<reference key="3">
    <citation type="journal article" date="2005" name="Nature">
        <title>The map-based sequence of the rice genome.</title>
        <authorList>
            <consortium name="International rice genome sequencing project (IRGSP)"/>
        </authorList>
    </citation>
    <scope>NUCLEOTIDE SEQUENCE [LARGE SCALE GENOMIC DNA]</scope>
    <source>
        <strain>cv. Nipponbare</strain>
    </source>
</reference>
<reference key="4">
    <citation type="journal article" date="2008" name="Nucleic Acids Res.">
        <title>The rice annotation project database (RAP-DB): 2008 update.</title>
        <authorList>
            <consortium name="The rice annotation project (RAP)"/>
        </authorList>
    </citation>
    <scope>GENOME REANNOTATION</scope>
    <source>
        <strain>cv. Nipponbare</strain>
    </source>
</reference>
<reference key="5">
    <citation type="journal article" date="2013" name="Rice">
        <title>Improvement of the Oryza sativa Nipponbare reference genome using next generation sequence and optical map data.</title>
        <authorList>
            <person name="Kawahara Y."/>
            <person name="de la Bastide M."/>
            <person name="Hamilton J.P."/>
            <person name="Kanamori H."/>
            <person name="McCombie W.R."/>
            <person name="Ouyang S."/>
            <person name="Schwartz D.C."/>
            <person name="Tanaka T."/>
            <person name="Wu J."/>
            <person name="Zhou S."/>
            <person name="Childs K.L."/>
            <person name="Davidson R.M."/>
            <person name="Lin H."/>
            <person name="Quesada-Ocampo L."/>
            <person name="Vaillancourt B."/>
            <person name="Sakai H."/>
            <person name="Lee S.S."/>
            <person name="Kim J."/>
            <person name="Numa H."/>
            <person name="Itoh T."/>
            <person name="Buell C.R."/>
            <person name="Matsumoto T."/>
        </authorList>
    </citation>
    <scope>GENOME REANNOTATION</scope>
    <source>
        <strain>cv. Nipponbare</strain>
    </source>
</reference>
<evidence type="ECO:0000250" key="1"/>
<evidence type="ECO:0000255" key="2"/>
<evidence type="ECO:0000255" key="3">
    <source>
        <dbReference type="PROSITE-ProRule" id="PRU00609"/>
    </source>
</evidence>
<evidence type="ECO:0000256" key="4">
    <source>
        <dbReference type="SAM" id="MobiDB-lite"/>
    </source>
</evidence>
<evidence type="ECO:0000269" key="5">
    <source>
    </source>
</evidence>
<evidence type="ECO:0000305" key="6"/>
<organism>
    <name type="scientific">Oryza sativa subsp. japonica</name>
    <name type="common">Rice</name>
    <dbReference type="NCBI Taxonomy" id="39947"/>
    <lineage>
        <taxon>Eukaryota</taxon>
        <taxon>Viridiplantae</taxon>
        <taxon>Streptophyta</taxon>
        <taxon>Embryophyta</taxon>
        <taxon>Tracheophyta</taxon>
        <taxon>Spermatophyta</taxon>
        <taxon>Magnoliopsida</taxon>
        <taxon>Liliopsida</taxon>
        <taxon>Poales</taxon>
        <taxon>Poaceae</taxon>
        <taxon>BOP clade</taxon>
        <taxon>Oryzoideae</taxon>
        <taxon>Oryzeae</taxon>
        <taxon>Oryzinae</taxon>
        <taxon>Oryza</taxon>
        <taxon>Oryza sativa</taxon>
    </lineage>
</organism>
<keyword id="KW-0003">3Fe-4S</keyword>
<keyword id="KW-0028">Amino-acid biosynthesis</keyword>
<keyword id="KW-0150">Chloroplast</keyword>
<keyword id="KW-0274">FAD</keyword>
<keyword id="KW-0285">Flavoprotein</keyword>
<keyword id="KW-0288">FMN</keyword>
<keyword id="KW-0314">Glutamate biosynthesis</keyword>
<keyword id="KW-0315">Glutamine amidotransferase</keyword>
<keyword id="KW-0408">Iron</keyword>
<keyword id="KW-0411">Iron-sulfur</keyword>
<keyword id="KW-0479">Metal-binding</keyword>
<keyword id="KW-0520">NAD</keyword>
<keyword id="KW-0560">Oxidoreductase</keyword>
<keyword id="KW-0934">Plastid</keyword>
<keyword id="KW-1185">Reference proteome</keyword>
<keyword id="KW-0809">Transit peptide</keyword>
<accession>Q0DG35</accession>
<accession>A7VKB1</accession>
<accession>Q6I618</accession>
<accession>Q6I619</accession>
<dbReference type="EC" id="1.4.1.14"/>
<dbReference type="EMBL" id="AB274818">
    <property type="protein sequence ID" value="BAF80064.1"/>
    <property type="molecule type" value="mRNA"/>
</dbReference>
<dbReference type="EMBL" id="AC093956">
    <property type="protein sequence ID" value="AAT58740.1"/>
    <property type="status" value="ALT_SEQ"/>
    <property type="molecule type" value="Genomic_DNA"/>
</dbReference>
<dbReference type="EMBL" id="AC104709">
    <property type="protein sequence ID" value="AAT58702.1"/>
    <property type="status" value="ALT_SEQ"/>
    <property type="molecule type" value="Genomic_DNA"/>
</dbReference>
<dbReference type="EMBL" id="AP008211">
    <property type="protein sequence ID" value="BAF18188.1"/>
    <property type="status" value="ALT_SEQ"/>
    <property type="molecule type" value="Genomic_DNA"/>
</dbReference>
<dbReference type="EMBL" id="AP014961">
    <property type="status" value="NOT_ANNOTATED_CDS"/>
    <property type="molecule type" value="Genomic_DNA"/>
</dbReference>
<dbReference type="RefSeq" id="XP_015640407.1">
    <property type="nucleotide sequence ID" value="XM_015784921.1"/>
</dbReference>
<dbReference type="SMR" id="Q0DG35"/>
<dbReference type="FunCoup" id="Q0DG35">
    <property type="interactions" value="1453"/>
</dbReference>
<dbReference type="STRING" id="39947.Q0DG35"/>
<dbReference type="PaxDb" id="39947-Q0DG35"/>
<dbReference type="EnsemblPlants" id="Os05t0555600-03">
    <property type="protein sequence ID" value="Os05t0555600-03"/>
    <property type="gene ID" value="Os05g0555600"/>
</dbReference>
<dbReference type="Gramene" id="Os05t0555600-03">
    <property type="protein sequence ID" value="Os05t0555600-03"/>
    <property type="gene ID" value="Os05g0555600"/>
</dbReference>
<dbReference type="KEGG" id="dosa:Os05g0555600"/>
<dbReference type="eggNOG" id="KOG0399">
    <property type="taxonomic scope" value="Eukaryota"/>
</dbReference>
<dbReference type="HOGENOM" id="CLU_000422_3_0_1"/>
<dbReference type="InParanoid" id="Q0DG35"/>
<dbReference type="OrthoDB" id="4327079at2759"/>
<dbReference type="PlantReactome" id="R-OSA-1119535">
    <property type="pathway name" value="Glutamate biosynthesis IV"/>
</dbReference>
<dbReference type="UniPathway" id="UPA00045"/>
<dbReference type="UniPathway" id="UPA00634">
    <property type="reaction ID" value="UER00690"/>
</dbReference>
<dbReference type="Proteomes" id="UP000000763">
    <property type="component" value="Chromosome 5"/>
</dbReference>
<dbReference type="Proteomes" id="UP000059680">
    <property type="component" value="Chromosome 5"/>
</dbReference>
<dbReference type="GO" id="GO:0009507">
    <property type="term" value="C:chloroplast"/>
    <property type="evidence" value="ECO:0007669"/>
    <property type="project" value="UniProtKB-SubCell"/>
</dbReference>
<dbReference type="GO" id="GO:0051538">
    <property type="term" value="F:3 iron, 4 sulfur cluster binding"/>
    <property type="evidence" value="ECO:0007669"/>
    <property type="project" value="UniProtKB-KW"/>
</dbReference>
<dbReference type="GO" id="GO:0050660">
    <property type="term" value="F:flavin adenine dinucleotide binding"/>
    <property type="evidence" value="ECO:0007669"/>
    <property type="project" value="InterPro"/>
</dbReference>
<dbReference type="GO" id="GO:0010181">
    <property type="term" value="F:FMN binding"/>
    <property type="evidence" value="ECO:0007669"/>
    <property type="project" value="InterPro"/>
</dbReference>
<dbReference type="GO" id="GO:0016040">
    <property type="term" value="F:glutamate synthase (NADH) activity"/>
    <property type="evidence" value="ECO:0000318"/>
    <property type="project" value="GO_Central"/>
</dbReference>
<dbReference type="GO" id="GO:0005506">
    <property type="term" value="F:iron ion binding"/>
    <property type="evidence" value="ECO:0007669"/>
    <property type="project" value="InterPro"/>
</dbReference>
<dbReference type="GO" id="GO:0016639">
    <property type="term" value="F:oxidoreductase activity, acting on the CH-NH2 group of donors, NAD or NADP as acceptor"/>
    <property type="evidence" value="ECO:0007669"/>
    <property type="project" value="InterPro"/>
</dbReference>
<dbReference type="GO" id="GO:0019676">
    <property type="term" value="P:ammonia assimilation cycle"/>
    <property type="evidence" value="ECO:0000318"/>
    <property type="project" value="GO_Central"/>
</dbReference>
<dbReference type="GO" id="GO:0006537">
    <property type="term" value="P:glutamate biosynthetic process"/>
    <property type="evidence" value="ECO:0000318"/>
    <property type="project" value="GO_Central"/>
</dbReference>
<dbReference type="GO" id="GO:0097054">
    <property type="term" value="P:L-glutamate biosynthetic process"/>
    <property type="evidence" value="ECO:0007669"/>
    <property type="project" value="UniProtKB-UniPathway"/>
</dbReference>
<dbReference type="CDD" id="cd00982">
    <property type="entry name" value="gltB_C"/>
    <property type="match status" value="1"/>
</dbReference>
<dbReference type="CDD" id="cd00713">
    <property type="entry name" value="GltS"/>
    <property type="match status" value="1"/>
</dbReference>
<dbReference type="CDD" id="cd02808">
    <property type="entry name" value="GltS_FMN"/>
    <property type="match status" value="1"/>
</dbReference>
<dbReference type="FunFam" id="3.20.20.70:FF:000031">
    <property type="entry name" value="Glutamate synthase 1 [NADH]"/>
    <property type="match status" value="1"/>
</dbReference>
<dbReference type="FunFam" id="1.10.1060.10:FF:000009">
    <property type="entry name" value="Glutamate synthase 1 [NADH] chloroplastic"/>
    <property type="match status" value="1"/>
</dbReference>
<dbReference type="FunFam" id="3.60.20.10:FF:000043">
    <property type="entry name" value="Glutamate synthase 1 [NADH] chloroplastic"/>
    <property type="match status" value="1"/>
</dbReference>
<dbReference type="FunFam" id="3.20.20.70:FF:000017">
    <property type="entry name" value="Glutamate synthase [NADH], amyloplastic"/>
    <property type="match status" value="1"/>
</dbReference>
<dbReference type="FunFam" id="3.40.50.720:FF:000113">
    <property type="entry name" value="Glutamate synthase [NADH], amyloplastic"/>
    <property type="match status" value="1"/>
</dbReference>
<dbReference type="FunFam" id="3.50.50.60:FF:000022">
    <property type="entry name" value="Glutamate synthase [NADH], amyloplastic"/>
    <property type="match status" value="1"/>
</dbReference>
<dbReference type="FunFam" id="2.160.20.60:FF:000001">
    <property type="entry name" value="Glutamate synthase, large subunit"/>
    <property type="match status" value="1"/>
</dbReference>
<dbReference type="Gene3D" id="3.20.20.70">
    <property type="entry name" value="Aldolase class I"/>
    <property type="match status" value="2"/>
</dbReference>
<dbReference type="Gene3D" id="1.10.1060.10">
    <property type="entry name" value="Alpha-helical ferredoxin"/>
    <property type="match status" value="1"/>
</dbReference>
<dbReference type="Gene3D" id="3.50.50.60">
    <property type="entry name" value="FAD/NAD(P)-binding domain"/>
    <property type="match status" value="1"/>
</dbReference>
<dbReference type="Gene3D" id="2.160.20.60">
    <property type="entry name" value="Glutamate synthase, alpha subunit, C-terminal domain"/>
    <property type="match status" value="1"/>
</dbReference>
<dbReference type="Gene3D" id="3.60.20.10">
    <property type="entry name" value="Glutamine Phosphoribosylpyrophosphate, subunit 1, domain 1"/>
    <property type="match status" value="1"/>
</dbReference>
<dbReference type="Gene3D" id="3.40.50.720">
    <property type="entry name" value="NAD(P)-binding Rossmann-like Domain"/>
    <property type="match status" value="1"/>
</dbReference>
<dbReference type="InterPro" id="IPR013785">
    <property type="entry name" value="Aldolase_TIM"/>
</dbReference>
<dbReference type="InterPro" id="IPR028261">
    <property type="entry name" value="DPD_II"/>
</dbReference>
<dbReference type="InterPro" id="IPR036188">
    <property type="entry name" value="FAD/NAD-bd_sf"/>
</dbReference>
<dbReference type="InterPro" id="IPR023753">
    <property type="entry name" value="FAD/NAD-binding_dom"/>
</dbReference>
<dbReference type="InterPro" id="IPR017932">
    <property type="entry name" value="GATase_2_dom"/>
</dbReference>
<dbReference type="InterPro" id="IPR002489">
    <property type="entry name" value="Glu_synth_asu_C"/>
</dbReference>
<dbReference type="InterPro" id="IPR036485">
    <property type="entry name" value="Glu_synth_asu_C_sf"/>
</dbReference>
<dbReference type="InterPro" id="IPR006982">
    <property type="entry name" value="Glu_synth_centr_N"/>
</dbReference>
<dbReference type="InterPro" id="IPR012220">
    <property type="entry name" value="Glu_synth_euk"/>
</dbReference>
<dbReference type="InterPro" id="IPR002932">
    <property type="entry name" value="Glu_synthdom"/>
</dbReference>
<dbReference type="InterPro" id="IPR006005">
    <property type="entry name" value="Glut_synth_ssu1"/>
</dbReference>
<dbReference type="InterPro" id="IPR051394">
    <property type="entry name" value="Glutamate_Synthase"/>
</dbReference>
<dbReference type="InterPro" id="IPR009051">
    <property type="entry name" value="Helical_ferredxn"/>
</dbReference>
<dbReference type="InterPro" id="IPR029055">
    <property type="entry name" value="Ntn_hydrolases_N"/>
</dbReference>
<dbReference type="NCBIfam" id="TIGR01317">
    <property type="entry name" value="GOGAT_sm_gam"/>
    <property type="match status" value="1"/>
</dbReference>
<dbReference type="NCBIfam" id="NF008730">
    <property type="entry name" value="PRK11750.1"/>
    <property type="match status" value="1"/>
</dbReference>
<dbReference type="PANTHER" id="PTHR43100">
    <property type="entry name" value="GLUTAMATE SYNTHASE [NADPH] SMALL CHAIN"/>
    <property type="match status" value="1"/>
</dbReference>
<dbReference type="PANTHER" id="PTHR43100:SF1">
    <property type="entry name" value="GLUTAMATE SYNTHASE [NADPH] SMALL CHAIN"/>
    <property type="match status" value="1"/>
</dbReference>
<dbReference type="Pfam" id="PF14691">
    <property type="entry name" value="Fer4_20"/>
    <property type="match status" value="1"/>
</dbReference>
<dbReference type="Pfam" id="PF00310">
    <property type="entry name" value="GATase_2"/>
    <property type="match status" value="1"/>
</dbReference>
<dbReference type="Pfam" id="PF04898">
    <property type="entry name" value="Glu_syn_central"/>
    <property type="match status" value="1"/>
</dbReference>
<dbReference type="Pfam" id="PF01645">
    <property type="entry name" value="Glu_synthase"/>
    <property type="match status" value="1"/>
</dbReference>
<dbReference type="Pfam" id="PF01493">
    <property type="entry name" value="GXGXG"/>
    <property type="match status" value="1"/>
</dbReference>
<dbReference type="Pfam" id="PF07992">
    <property type="entry name" value="Pyr_redox_2"/>
    <property type="match status" value="1"/>
</dbReference>
<dbReference type="PIRSF" id="PIRSF000187">
    <property type="entry name" value="GOGAT"/>
    <property type="match status" value="1"/>
</dbReference>
<dbReference type="PRINTS" id="PR00419">
    <property type="entry name" value="ADXRDTASE"/>
</dbReference>
<dbReference type="SUPFAM" id="SSF69336">
    <property type="entry name" value="Alpha subunit of glutamate synthase, C-terminal domain"/>
    <property type="match status" value="1"/>
</dbReference>
<dbReference type="SUPFAM" id="SSF46548">
    <property type="entry name" value="alpha-helical ferredoxin"/>
    <property type="match status" value="1"/>
</dbReference>
<dbReference type="SUPFAM" id="SSF51905">
    <property type="entry name" value="FAD/NAD(P)-binding domain"/>
    <property type="match status" value="1"/>
</dbReference>
<dbReference type="SUPFAM" id="SSF51395">
    <property type="entry name" value="FMN-linked oxidoreductases"/>
    <property type="match status" value="1"/>
</dbReference>
<dbReference type="SUPFAM" id="SSF56235">
    <property type="entry name" value="N-terminal nucleophile aminohydrolases (Ntn hydrolases)"/>
    <property type="match status" value="1"/>
</dbReference>
<dbReference type="PROSITE" id="PS51278">
    <property type="entry name" value="GATASE_TYPE_2"/>
    <property type="match status" value="1"/>
</dbReference>
<comment type="function">
    <text evidence="1">Involved in glutamate biosynthesis.</text>
</comment>
<comment type="catalytic activity">
    <reaction>
        <text>2 L-glutamate + NAD(+) = L-glutamine + 2-oxoglutarate + NADH + H(+)</text>
        <dbReference type="Rhea" id="RHEA:13753"/>
        <dbReference type="ChEBI" id="CHEBI:15378"/>
        <dbReference type="ChEBI" id="CHEBI:16810"/>
        <dbReference type="ChEBI" id="CHEBI:29985"/>
        <dbReference type="ChEBI" id="CHEBI:57540"/>
        <dbReference type="ChEBI" id="CHEBI:57945"/>
        <dbReference type="ChEBI" id="CHEBI:58359"/>
        <dbReference type="EC" id="1.4.1.14"/>
    </reaction>
</comment>
<comment type="cofactor">
    <cofactor evidence="1">
        <name>[3Fe-4S] cluster</name>
        <dbReference type="ChEBI" id="CHEBI:21137"/>
    </cofactor>
    <text evidence="1">Binds 1 [3Fe-4S] cluster.</text>
</comment>
<comment type="cofactor">
    <cofactor evidence="1">
        <name>FAD</name>
        <dbReference type="ChEBI" id="CHEBI:57692"/>
    </cofactor>
</comment>
<comment type="cofactor">
    <cofactor evidence="1">
        <name>FMN</name>
        <dbReference type="ChEBI" id="CHEBI:58210"/>
    </cofactor>
</comment>
<comment type="pathway">
    <text>Amino-acid biosynthesis; L-glutamate biosynthesis via GLT pathway; L-glutamate from 2-oxoglutarate and L-glutamine (NAD(+) route): step 1/1.</text>
</comment>
<comment type="pathway">
    <text>Energy metabolism; nitrogen metabolism.</text>
</comment>
<comment type="subunit">
    <text evidence="1">Monomer.</text>
</comment>
<comment type="subcellular location">
    <subcellularLocation>
        <location evidence="6">Plastid</location>
        <location evidence="6">Chloroplast</location>
    </subcellularLocation>
</comment>
<comment type="tissue specificity">
    <text evidence="5">Expressed in leaf blades and sheaths.</text>
</comment>
<comment type="similarity">
    <text evidence="6">Belongs to the glutamate synthase family.</text>
</comment>
<comment type="sequence caution" evidence="6">
    <conflict type="erroneous gene model prediction">
        <sequence resource="EMBL-CDS" id="AAT58702"/>
    </conflict>
    <text>Was originally thought to correspond to two different genes.</text>
</comment>
<comment type="sequence caution" evidence="6">
    <conflict type="erroneous gene model prediction">
        <sequence resource="EMBL-CDS" id="AAT58740"/>
    </conflict>
    <text>Was originally thought to correspond to two different genes.</text>
</comment>
<comment type="sequence caution" evidence="6">
    <conflict type="erroneous gene model prediction">
        <sequence resource="EMBL-CDS" id="BAF18188"/>
    </conflict>
</comment>
<name>GLT2_ORYSJ</name>
<gene>
    <name type="ordered locus">Os05g0555600</name>
    <name type="ordered locus">LOC_Os05g48200</name>
    <name type="ORF">OJ1214_E03.1</name>
    <name type="ORF">OJ1263_E10.17</name>
</gene>
<proteinExistence type="evidence at transcript level"/>
<feature type="transit peptide" description="Chloroplast" evidence="2">
    <location>
        <begin position="1"/>
        <end position="30"/>
    </location>
</feature>
<feature type="chain" id="PRO_0000395202" description="Glutamate synthase 2 [NADH], chloroplastic">
    <location>
        <begin position="31"/>
        <end position="2188"/>
    </location>
</feature>
<feature type="domain" description="Glutamine amidotransferase type-2" evidence="3">
    <location>
        <begin position="107"/>
        <end position="511"/>
    </location>
</feature>
<feature type="region of interest" description="Disordered" evidence="4">
    <location>
        <begin position="14"/>
        <end position="40"/>
    </location>
</feature>
<feature type="region of interest" description="Disordered" evidence="4">
    <location>
        <begin position="61"/>
        <end position="94"/>
    </location>
</feature>
<feature type="compositionally biased region" description="Low complexity" evidence="4">
    <location>
        <begin position="65"/>
        <end position="80"/>
    </location>
</feature>
<feature type="active site" description="Nucleophile" evidence="3">
    <location>
        <position position="107"/>
    </location>
</feature>
<feature type="binding site" evidence="1">
    <location>
        <begin position="1198"/>
        <end position="1255"/>
    </location>
    <ligand>
        <name>FMN</name>
        <dbReference type="ChEBI" id="CHEBI:58210"/>
    </ligand>
</feature>
<feature type="binding site" evidence="1">
    <location>
        <position position="1251"/>
    </location>
    <ligand>
        <name>[3Fe-4S] cluster</name>
        <dbReference type="ChEBI" id="CHEBI:21137"/>
    </ligand>
</feature>
<feature type="binding site" evidence="1">
    <location>
        <position position="1257"/>
    </location>
    <ligand>
        <name>[3Fe-4S] cluster</name>
        <dbReference type="ChEBI" id="CHEBI:21137"/>
    </ligand>
</feature>
<feature type="binding site" evidence="1">
    <location>
        <position position="1262"/>
    </location>
    <ligand>
        <name>[3Fe-4S] cluster</name>
        <dbReference type="ChEBI" id="CHEBI:21137"/>
    </ligand>
</feature>
<feature type="binding site" evidence="2">
    <location>
        <begin position="1974"/>
        <end position="1988"/>
    </location>
    <ligand>
        <name>NAD(+)</name>
        <dbReference type="ChEBI" id="CHEBI:57540"/>
    </ligand>
</feature>